<keyword id="KW-0150">Chloroplast</keyword>
<keyword id="KW-0201">Cytochrome c-type biogenesis</keyword>
<keyword id="KW-0472">Membrane</keyword>
<keyword id="KW-0934">Plastid</keyword>
<keyword id="KW-1185">Reference proteome</keyword>
<keyword id="KW-0793">Thylakoid</keyword>
<keyword id="KW-0812">Transmembrane</keyword>
<keyword id="KW-1133">Transmembrane helix</keyword>
<sequence length="320" mass="36405">MIFSTLEHILTHISFSVVSIVITIHFLTLFLLVDEVVGLYDSSEKGMIVTFFCITGLLVTRWIYSGHFPLSDLYESLIFLSWGFSLIHMVSYLKFKKRKNNLSAITAPSAIFTQGFATSGLLTKMHQSAILAPALQSQWLMMHVSMMVLGYAALLCGSLLSVALLVITFRKAIKIIGENNNFSFSFGKIQYMNERSNVLLNTYFLSSKNYYRYQLTQQLDRWSYRIISLGFIFLTIGILSGAVWANEAWGSYWNWDPKETWAFITWTVFAIYFHTRTNTNLEGVNSALVASMGFLIIWICYFGVNLLGIGLHSYGSFTLN</sequence>
<reference key="1">
    <citation type="journal article" date="2006" name="BMC Genomics">
        <title>The complete chloroplast genome sequence of Gossypium hirsutum: organization and phylogenetic relationships to other angiosperms.</title>
        <authorList>
            <person name="Lee S.-B."/>
            <person name="Kaittanis C."/>
            <person name="Jansen R.K."/>
            <person name="Hostetler J.B."/>
            <person name="Tallon L.J."/>
            <person name="Town C.D."/>
            <person name="Daniell H."/>
        </authorList>
    </citation>
    <scope>NUCLEOTIDE SEQUENCE [LARGE SCALE GENOMIC DNA]</scope>
    <source>
        <strain>cv. Coker 310FR</strain>
    </source>
</reference>
<geneLocation type="chloroplast"/>
<dbReference type="EMBL" id="DQ345959">
    <property type="protein sequence ID" value="ABC73683.1"/>
    <property type="molecule type" value="Genomic_DNA"/>
</dbReference>
<dbReference type="RefSeq" id="YP_538991.1">
    <property type="nucleotide sequence ID" value="NC_007944.1"/>
</dbReference>
<dbReference type="SMR" id="Q2L962"/>
<dbReference type="GeneID" id="3989242"/>
<dbReference type="KEGG" id="ghi:3989242"/>
<dbReference type="OrthoDB" id="39605at41938"/>
<dbReference type="Proteomes" id="UP000189702">
    <property type="component" value="Chloroplast Pltd"/>
</dbReference>
<dbReference type="GO" id="GO:0009535">
    <property type="term" value="C:chloroplast thylakoid membrane"/>
    <property type="evidence" value="ECO:0007669"/>
    <property type="project" value="UniProtKB-SubCell"/>
</dbReference>
<dbReference type="GO" id="GO:0020037">
    <property type="term" value="F:heme binding"/>
    <property type="evidence" value="ECO:0007669"/>
    <property type="project" value="InterPro"/>
</dbReference>
<dbReference type="GO" id="GO:0017004">
    <property type="term" value="P:cytochrome complex assembly"/>
    <property type="evidence" value="ECO:0007669"/>
    <property type="project" value="UniProtKB-UniRule"/>
</dbReference>
<dbReference type="HAMAP" id="MF_01391">
    <property type="entry name" value="CytC_CcsA"/>
    <property type="match status" value="1"/>
</dbReference>
<dbReference type="InterPro" id="IPR002541">
    <property type="entry name" value="Cyt_c_assembly"/>
</dbReference>
<dbReference type="InterPro" id="IPR017562">
    <property type="entry name" value="Cyt_c_biogenesis_CcsA"/>
</dbReference>
<dbReference type="InterPro" id="IPR045062">
    <property type="entry name" value="Cyt_c_biogenesis_CcsA/CcmC"/>
</dbReference>
<dbReference type="NCBIfam" id="TIGR03144">
    <property type="entry name" value="cytochr_II_ccsB"/>
    <property type="match status" value="1"/>
</dbReference>
<dbReference type="PANTHER" id="PTHR30071:SF1">
    <property type="entry name" value="CYTOCHROME B_B6 PROTEIN-RELATED"/>
    <property type="match status" value="1"/>
</dbReference>
<dbReference type="PANTHER" id="PTHR30071">
    <property type="entry name" value="HEME EXPORTER PROTEIN C"/>
    <property type="match status" value="1"/>
</dbReference>
<dbReference type="Pfam" id="PF01578">
    <property type="entry name" value="Cytochrom_C_asm"/>
    <property type="match status" value="1"/>
</dbReference>
<evidence type="ECO:0000255" key="1">
    <source>
        <dbReference type="HAMAP-Rule" id="MF_01391"/>
    </source>
</evidence>
<gene>
    <name evidence="1" type="primary">ccsA</name>
</gene>
<proteinExistence type="inferred from homology"/>
<organism>
    <name type="scientific">Gossypium hirsutum</name>
    <name type="common">Upland cotton</name>
    <name type="synonym">Gossypium mexicanum</name>
    <dbReference type="NCBI Taxonomy" id="3635"/>
    <lineage>
        <taxon>Eukaryota</taxon>
        <taxon>Viridiplantae</taxon>
        <taxon>Streptophyta</taxon>
        <taxon>Embryophyta</taxon>
        <taxon>Tracheophyta</taxon>
        <taxon>Spermatophyta</taxon>
        <taxon>Magnoliopsida</taxon>
        <taxon>eudicotyledons</taxon>
        <taxon>Gunneridae</taxon>
        <taxon>Pentapetalae</taxon>
        <taxon>rosids</taxon>
        <taxon>malvids</taxon>
        <taxon>Malvales</taxon>
        <taxon>Malvaceae</taxon>
        <taxon>Malvoideae</taxon>
        <taxon>Gossypium</taxon>
    </lineage>
</organism>
<protein>
    <recommendedName>
        <fullName evidence="1">Cytochrome c biogenesis protein CcsA</fullName>
    </recommendedName>
</protein>
<comment type="function">
    <text evidence="1">Required during biogenesis of c-type cytochromes (cytochrome c6 and cytochrome f) at the step of heme attachment.</text>
</comment>
<comment type="subunit">
    <text evidence="1">May interact with Ccs1.</text>
</comment>
<comment type="subcellular location">
    <subcellularLocation>
        <location evidence="1">Plastid</location>
        <location evidence="1">Chloroplast thylakoid membrane</location>
        <topology evidence="1">Multi-pass membrane protein</topology>
    </subcellularLocation>
</comment>
<comment type="similarity">
    <text evidence="1">Belongs to the CcmF/CycK/Ccl1/NrfE/CcsA family.</text>
</comment>
<feature type="chain" id="PRO_0000353755" description="Cytochrome c biogenesis protein CcsA">
    <location>
        <begin position="1"/>
        <end position="320"/>
    </location>
</feature>
<feature type="transmembrane region" description="Helical" evidence="1">
    <location>
        <begin position="13"/>
        <end position="33"/>
    </location>
</feature>
<feature type="transmembrane region" description="Helical" evidence="1">
    <location>
        <begin position="46"/>
        <end position="66"/>
    </location>
</feature>
<feature type="transmembrane region" description="Helical" evidence="1">
    <location>
        <begin position="73"/>
        <end position="93"/>
    </location>
</feature>
<feature type="transmembrane region" description="Helical" evidence="1">
    <location>
        <begin position="102"/>
        <end position="122"/>
    </location>
</feature>
<feature type="transmembrane region" description="Helical" evidence="1">
    <location>
        <begin position="147"/>
        <end position="167"/>
    </location>
</feature>
<feature type="transmembrane region" description="Helical" evidence="1">
    <location>
        <begin position="226"/>
        <end position="246"/>
    </location>
</feature>
<feature type="transmembrane region" description="Helical" evidence="1">
    <location>
        <begin position="259"/>
        <end position="274"/>
    </location>
</feature>
<feature type="transmembrane region" description="Helical" evidence="1">
    <location>
        <begin position="289"/>
        <end position="309"/>
    </location>
</feature>
<accession>Q2L962</accession>
<name>CCSA_GOSHI</name>